<organism>
    <name type="scientific">Mus musculus</name>
    <name type="common">Mouse</name>
    <dbReference type="NCBI Taxonomy" id="10090"/>
    <lineage>
        <taxon>Eukaryota</taxon>
        <taxon>Metazoa</taxon>
        <taxon>Chordata</taxon>
        <taxon>Craniata</taxon>
        <taxon>Vertebrata</taxon>
        <taxon>Euteleostomi</taxon>
        <taxon>Mammalia</taxon>
        <taxon>Eutheria</taxon>
        <taxon>Euarchontoglires</taxon>
        <taxon>Glires</taxon>
        <taxon>Rodentia</taxon>
        <taxon>Myomorpha</taxon>
        <taxon>Muroidea</taxon>
        <taxon>Muridae</taxon>
        <taxon>Murinae</taxon>
        <taxon>Mus</taxon>
        <taxon>Mus</taxon>
    </lineage>
</organism>
<protein>
    <recommendedName>
        <fullName>Fibroblast growth factor 5</fullName>
        <shortName>FGF-5</shortName>
    </recommendedName>
    <alternativeName>
        <fullName>Heparin-binding growth factor 5</fullName>
        <shortName>HBGF-5</shortName>
    </alternativeName>
</protein>
<proteinExistence type="evidence at transcript level"/>
<feature type="signal peptide" evidence="3">
    <location>
        <begin position="1"/>
        <end position="20"/>
    </location>
</feature>
<feature type="chain" id="PRO_0000008959" description="Fibroblast growth factor 5">
    <location>
        <begin position="21"/>
        <end position="264"/>
    </location>
</feature>
<feature type="region of interest" description="Disordered" evidence="4">
    <location>
        <begin position="25"/>
        <end position="81"/>
    </location>
</feature>
<feature type="region of interest" description="Disordered" evidence="4">
    <location>
        <begin position="227"/>
        <end position="254"/>
    </location>
</feature>
<feature type="compositionally biased region" description="Low complexity" evidence="4">
    <location>
        <begin position="38"/>
        <end position="72"/>
    </location>
</feature>
<feature type="glycosylation site" description="N-linked (GlcNAc...) asparagine" evidence="3">
    <location>
        <position position="108"/>
    </location>
</feature>
<feature type="splice variant" id="VSP_001520" description="In isoform Short." evidence="5">
    <original>ILEI</original>
    <variation>QIYG</variation>
    <location>
        <begin position="118"/>
        <end position="121"/>
    </location>
</feature>
<feature type="splice variant" id="VSP_001521" description="In isoform Short." evidence="5">
    <location>
        <begin position="122"/>
        <end position="264"/>
    </location>
</feature>
<gene>
    <name type="primary">Fgf5</name>
    <name type="synonym">Fgf-5</name>
</gene>
<comment type="function">
    <text evidence="2">Plays an important role in the regulation of cell proliferation and cell differentiation. Required for normal regulation of the hair growth cycle. Functions as an inhibitor of hair elongation by promoting progression from anagen, the growth phase of the hair follicle, into catagen the apoptosis-induced regression phase (By similarity).</text>
</comment>
<comment type="subunit">
    <text evidence="1">Interacts with FGFR1 and FGFR2. Affinity between fibroblast growth factors (FGFs) and their receptors is increased by heparan sulfate glycosaminoglycans that function as coreceptors (By similarity).</text>
</comment>
<comment type="subcellular location">
    <subcellularLocation>
        <location evidence="6">Secreted</location>
    </subcellularLocation>
</comment>
<comment type="alternative products">
    <event type="alternative splicing"/>
    <isoform>
        <id>P15656-1</id>
        <name>Long</name>
        <sequence type="displayed"/>
    </isoform>
    <isoform>
        <id>P15656-2</id>
        <name>Short</name>
        <name>FGF-5S</name>
        <sequence type="described" ref="VSP_001520 VSP_001521"/>
    </isoform>
</comment>
<comment type="miscellaneous">
    <molecule>Isoform Short</molecule>
    <text evidence="6">Seems to have an antagonistic effect compared to that of the isoform Long.</text>
</comment>
<comment type="similarity">
    <text evidence="6">Belongs to the heparin-binding growth factors family.</text>
</comment>
<reference key="1">
    <citation type="journal article" date="1990" name="Dev. Biol.">
        <title>Isolation of cDNAs encoding four mouse FGF family members and characterization of their expression patterns during embryogenesis.</title>
        <authorList>
            <person name="Hebert J.M."/>
            <person name="Basilico C."/>
            <person name="Goldfarb M."/>
            <person name="Haub O."/>
            <person name="Martin G.R."/>
        </authorList>
    </citation>
    <scope>NUCLEOTIDE SEQUENCE [MRNA] (ISOFORM LONG)</scope>
</reference>
<reference key="2">
    <citation type="journal article" date="1990" name="Proc. Natl. Acad. Sci. U.S.A.">
        <title>Expression of the murine fibroblast growth factor 5 gene in the adult central nervous system.</title>
        <authorList>
            <person name="Haub O."/>
            <person name="Drucker B."/>
            <person name="Goldfarb M."/>
        </authorList>
    </citation>
    <scope>NUCLEOTIDE SEQUENCE [GENOMIC DNA] (ISOFORM LONG)</scope>
    <source>
        <strain>C57BL/6J</strain>
    </source>
</reference>
<reference key="3">
    <citation type="journal article" date="1998" name="J. Biol. Chem.">
        <title>An alternatively spliced fibroblast growth factor (FGF)-5 mRNA is abundant in brain and translates into a partial agonist/antagonist for FGF-5 neurotrophic activity.</title>
        <authorList>
            <person name="Ozawa K."/>
            <person name="Suzuki S."/>
            <person name="Asada M."/>
            <person name="Tomooka Y."/>
            <person name="Li A.J."/>
            <person name="Yoneda A."/>
            <person name="Komi A."/>
            <person name="Imamura T."/>
        </authorList>
    </citation>
    <scope>NUCLEOTIDE SEQUENCE [MRNA] (ISOFORM SHORT)</scope>
</reference>
<reference key="4">
    <citation type="journal article" date="2005" name="Science">
        <title>The transcriptional landscape of the mammalian genome.</title>
        <authorList>
            <person name="Carninci P."/>
            <person name="Kasukawa T."/>
            <person name="Katayama S."/>
            <person name="Gough J."/>
            <person name="Frith M.C."/>
            <person name="Maeda N."/>
            <person name="Oyama R."/>
            <person name="Ravasi T."/>
            <person name="Lenhard B."/>
            <person name="Wells C."/>
            <person name="Kodzius R."/>
            <person name="Shimokawa K."/>
            <person name="Bajic V.B."/>
            <person name="Brenner S.E."/>
            <person name="Batalov S."/>
            <person name="Forrest A.R."/>
            <person name="Zavolan M."/>
            <person name="Davis M.J."/>
            <person name="Wilming L.G."/>
            <person name="Aidinis V."/>
            <person name="Allen J.E."/>
            <person name="Ambesi-Impiombato A."/>
            <person name="Apweiler R."/>
            <person name="Aturaliya R.N."/>
            <person name="Bailey T.L."/>
            <person name="Bansal M."/>
            <person name="Baxter L."/>
            <person name="Beisel K.W."/>
            <person name="Bersano T."/>
            <person name="Bono H."/>
            <person name="Chalk A.M."/>
            <person name="Chiu K.P."/>
            <person name="Choudhary V."/>
            <person name="Christoffels A."/>
            <person name="Clutterbuck D.R."/>
            <person name="Crowe M.L."/>
            <person name="Dalla E."/>
            <person name="Dalrymple B.P."/>
            <person name="de Bono B."/>
            <person name="Della Gatta G."/>
            <person name="di Bernardo D."/>
            <person name="Down T."/>
            <person name="Engstrom P."/>
            <person name="Fagiolini M."/>
            <person name="Faulkner G."/>
            <person name="Fletcher C.F."/>
            <person name="Fukushima T."/>
            <person name="Furuno M."/>
            <person name="Futaki S."/>
            <person name="Gariboldi M."/>
            <person name="Georgii-Hemming P."/>
            <person name="Gingeras T.R."/>
            <person name="Gojobori T."/>
            <person name="Green R.E."/>
            <person name="Gustincich S."/>
            <person name="Harbers M."/>
            <person name="Hayashi Y."/>
            <person name="Hensch T.K."/>
            <person name="Hirokawa N."/>
            <person name="Hill D."/>
            <person name="Huminiecki L."/>
            <person name="Iacono M."/>
            <person name="Ikeo K."/>
            <person name="Iwama A."/>
            <person name="Ishikawa T."/>
            <person name="Jakt M."/>
            <person name="Kanapin A."/>
            <person name="Katoh M."/>
            <person name="Kawasawa Y."/>
            <person name="Kelso J."/>
            <person name="Kitamura H."/>
            <person name="Kitano H."/>
            <person name="Kollias G."/>
            <person name="Krishnan S.P."/>
            <person name="Kruger A."/>
            <person name="Kummerfeld S.K."/>
            <person name="Kurochkin I.V."/>
            <person name="Lareau L.F."/>
            <person name="Lazarevic D."/>
            <person name="Lipovich L."/>
            <person name="Liu J."/>
            <person name="Liuni S."/>
            <person name="McWilliam S."/>
            <person name="Madan Babu M."/>
            <person name="Madera M."/>
            <person name="Marchionni L."/>
            <person name="Matsuda H."/>
            <person name="Matsuzawa S."/>
            <person name="Miki H."/>
            <person name="Mignone F."/>
            <person name="Miyake S."/>
            <person name="Morris K."/>
            <person name="Mottagui-Tabar S."/>
            <person name="Mulder N."/>
            <person name="Nakano N."/>
            <person name="Nakauchi H."/>
            <person name="Ng P."/>
            <person name="Nilsson R."/>
            <person name="Nishiguchi S."/>
            <person name="Nishikawa S."/>
            <person name="Nori F."/>
            <person name="Ohara O."/>
            <person name="Okazaki Y."/>
            <person name="Orlando V."/>
            <person name="Pang K.C."/>
            <person name="Pavan W.J."/>
            <person name="Pavesi G."/>
            <person name="Pesole G."/>
            <person name="Petrovsky N."/>
            <person name="Piazza S."/>
            <person name="Reed J."/>
            <person name="Reid J.F."/>
            <person name="Ring B.Z."/>
            <person name="Ringwald M."/>
            <person name="Rost B."/>
            <person name="Ruan Y."/>
            <person name="Salzberg S.L."/>
            <person name="Sandelin A."/>
            <person name="Schneider C."/>
            <person name="Schoenbach C."/>
            <person name="Sekiguchi K."/>
            <person name="Semple C.A."/>
            <person name="Seno S."/>
            <person name="Sessa L."/>
            <person name="Sheng Y."/>
            <person name="Shibata Y."/>
            <person name="Shimada H."/>
            <person name="Shimada K."/>
            <person name="Silva D."/>
            <person name="Sinclair B."/>
            <person name="Sperling S."/>
            <person name="Stupka E."/>
            <person name="Sugiura K."/>
            <person name="Sultana R."/>
            <person name="Takenaka Y."/>
            <person name="Taki K."/>
            <person name="Tammoja K."/>
            <person name="Tan S.L."/>
            <person name="Tang S."/>
            <person name="Taylor M.S."/>
            <person name="Tegner J."/>
            <person name="Teichmann S.A."/>
            <person name="Ueda H.R."/>
            <person name="van Nimwegen E."/>
            <person name="Verardo R."/>
            <person name="Wei C.L."/>
            <person name="Yagi K."/>
            <person name="Yamanishi H."/>
            <person name="Zabarovsky E."/>
            <person name="Zhu S."/>
            <person name="Zimmer A."/>
            <person name="Hide W."/>
            <person name="Bult C."/>
            <person name="Grimmond S.M."/>
            <person name="Teasdale R.D."/>
            <person name="Liu E.T."/>
            <person name="Brusic V."/>
            <person name="Quackenbush J."/>
            <person name="Wahlestedt C."/>
            <person name="Mattick J.S."/>
            <person name="Hume D.A."/>
            <person name="Kai C."/>
            <person name="Sasaki D."/>
            <person name="Tomaru Y."/>
            <person name="Fukuda S."/>
            <person name="Kanamori-Katayama M."/>
            <person name="Suzuki M."/>
            <person name="Aoki J."/>
            <person name="Arakawa T."/>
            <person name="Iida J."/>
            <person name="Imamura K."/>
            <person name="Itoh M."/>
            <person name="Kato T."/>
            <person name="Kawaji H."/>
            <person name="Kawagashira N."/>
            <person name="Kawashima T."/>
            <person name="Kojima M."/>
            <person name="Kondo S."/>
            <person name="Konno H."/>
            <person name="Nakano K."/>
            <person name="Ninomiya N."/>
            <person name="Nishio T."/>
            <person name="Okada M."/>
            <person name="Plessy C."/>
            <person name="Shibata K."/>
            <person name="Shiraki T."/>
            <person name="Suzuki S."/>
            <person name="Tagami M."/>
            <person name="Waki K."/>
            <person name="Watahiki A."/>
            <person name="Okamura-Oho Y."/>
            <person name="Suzuki H."/>
            <person name="Kawai J."/>
            <person name="Hayashizaki Y."/>
        </authorList>
    </citation>
    <scope>NUCLEOTIDE SEQUENCE [LARGE SCALE MRNA] (ISOFORM LONG)</scope>
    <source>
        <strain>C57BL/6J</strain>
        <tissue>Skin</tissue>
    </source>
</reference>
<reference key="5">
    <citation type="journal article" date="2004" name="Genome Res.">
        <title>The status, quality, and expansion of the NIH full-length cDNA project: the Mammalian Gene Collection (MGC).</title>
        <authorList>
            <consortium name="The MGC Project Team"/>
        </authorList>
    </citation>
    <scope>NUCLEOTIDE SEQUENCE [LARGE SCALE MRNA] (ISOFORM LONG)</scope>
    <source>
        <strain>C57BL/6J</strain>
        <tissue>Embryo</tissue>
    </source>
</reference>
<evidence type="ECO:0000250" key="1"/>
<evidence type="ECO:0000250" key="2">
    <source>
        <dbReference type="UniProtKB" id="Q20FD0"/>
    </source>
</evidence>
<evidence type="ECO:0000255" key="3"/>
<evidence type="ECO:0000256" key="4">
    <source>
        <dbReference type="SAM" id="MobiDB-lite"/>
    </source>
</evidence>
<evidence type="ECO:0000303" key="5">
    <source>
    </source>
</evidence>
<evidence type="ECO:0000305" key="6"/>
<keyword id="KW-0025">Alternative splicing</keyword>
<keyword id="KW-0325">Glycoprotein</keyword>
<keyword id="KW-0339">Growth factor</keyword>
<keyword id="KW-0497">Mitogen</keyword>
<keyword id="KW-1185">Reference proteome</keyword>
<keyword id="KW-0964">Secreted</keyword>
<keyword id="KW-0732">Signal</keyword>
<name>FGF5_MOUSE</name>
<dbReference type="EMBL" id="M30643">
    <property type="protein sequence ID" value="AAA96698.1"/>
    <property type="molecule type" value="mRNA"/>
</dbReference>
<dbReference type="EMBL" id="M37823">
    <property type="protein sequence ID" value="AAB02660.1"/>
    <property type="molecule type" value="Genomic_DNA"/>
</dbReference>
<dbReference type="EMBL" id="M37821">
    <property type="protein sequence ID" value="AAB02660.1"/>
    <property type="status" value="JOINED"/>
    <property type="molecule type" value="Genomic_DNA"/>
</dbReference>
<dbReference type="EMBL" id="M37822">
    <property type="protein sequence ID" value="AAB02660.1"/>
    <property type="status" value="JOINED"/>
    <property type="molecule type" value="Genomic_DNA"/>
</dbReference>
<dbReference type="EMBL" id="M37821">
    <property type="protein sequence ID" value="AAB02659.1"/>
    <property type="status" value="ALT_SEQ"/>
    <property type="molecule type" value="Genomic_DNA"/>
</dbReference>
<dbReference type="EMBL" id="AB016516">
    <property type="protein sequence ID" value="BAA33737.1"/>
    <property type="molecule type" value="mRNA"/>
</dbReference>
<dbReference type="EMBL" id="AK028694">
    <property type="protein sequence ID" value="BAC26069.1"/>
    <property type="molecule type" value="mRNA"/>
</dbReference>
<dbReference type="EMBL" id="AK028894">
    <property type="protein sequence ID" value="BAC26179.1"/>
    <property type="molecule type" value="mRNA"/>
</dbReference>
<dbReference type="EMBL" id="BC071227">
    <property type="protein sequence ID" value="AAH71227.1"/>
    <property type="molecule type" value="mRNA"/>
</dbReference>
<dbReference type="CCDS" id="CCDS19455.1">
    <molecule id="P15656-1"/>
</dbReference>
<dbReference type="CCDS" id="CCDS80344.1">
    <molecule id="P15656-2"/>
</dbReference>
<dbReference type="PIR" id="A36207">
    <property type="entry name" value="A36207"/>
</dbReference>
<dbReference type="PIR" id="B36207">
    <property type="entry name" value="B36207"/>
</dbReference>
<dbReference type="RefSeq" id="NP_001264197.1">
    <molecule id="P15656-2"/>
    <property type="nucleotide sequence ID" value="NM_001277268.2"/>
</dbReference>
<dbReference type="RefSeq" id="NP_034333.1">
    <molecule id="P15656-1"/>
    <property type="nucleotide sequence ID" value="NM_010203.6"/>
</dbReference>
<dbReference type="SMR" id="P15656"/>
<dbReference type="FunCoup" id="P15656">
    <property type="interactions" value="1069"/>
</dbReference>
<dbReference type="STRING" id="10090.ENSMUSP00000031280"/>
<dbReference type="GlyCosmos" id="P15656">
    <property type="glycosylation" value="1 site, No reported glycans"/>
</dbReference>
<dbReference type="GlyGen" id="P15656">
    <property type="glycosylation" value="1 site"/>
</dbReference>
<dbReference type="iPTMnet" id="P15656"/>
<dbReference type="PhosphoSitePlus" id="P15656"/>
<dbReference type="PaxDb" id="10090-ENSMUSP00000031280"/>
<dbReference type="Antibodypedia" id="4148">
    <property type="antibodies" value="296 antibodies from 37 providers"/>
</dbReference>
<dbReference type="DNASU" id="14176"/>
<dbReference type="Ensembl" id="ENSMUST00000031280.2">
    <molecule id="P15656-1"/>
    <property type="protein sequence ID" value="ENSMUSP00000031280.2"/>
    <property type="gene ID" value="ENSMUSG00000029337.3"/>
</dbReference>
<dbReference type="Ensembl" id="ENSMUST00000200059.2">
    <molecule id="P15656-2"/>
    <property type="protein sequence ID" value="ENSMUSP00000142420.2"/>
    <property type="gene ID" value="ENSMUSG00000029337.3"/>
</dbReference>
<dbReference type="GeneID" id="14176"/>
<dbReference type="KEGG" id="mmu:14176"/>
<dbReference type="UCSC" id="uc008ygc.2">
    <molecule id="P15656-1"/>
    <property type="organism name" value="mouse"/>
</dbReference>
<dbReference type="UCSC" id="uc008ygd.2">
    <molecule id="P15656-2"/>
    <property type="organism name" value="mouse"/>
</dbReference>
<dbReference type="AGR" id="MGI:95519"/>
<dbReference type="CTD" id="2250"/>
<dbReference type="MGI" id="MGI:95519">
    <property type="gene designation" value="Fgf5"/>
</dbReference>
<dbReference type="VEuPathDB" id="HostDB:ENSMUSG00000029337"/>
<dbReference type="eggNOG" id="KOG3885">
    <property type="taxonomic scope" value="Eukaryota"/>
</dbReference>
<dbReference type="GeneTree" id="ENSGT00940000158449"/>
<dbReference type="HOGENOM" id="CLU_081609_7_0_1"/>
<dbReference type="InParanoid" id="P15656"/>
<dbReference type="OMA" id="AKFTEDC"/>
<dbReference type="OrthoDB" id="9947297at2759"/>
<dbReference type="PhylomeDB" id="P15656"/>
<dbReference type="TreeFam" id="TF317805"/>
<dbReference type="Reactome" id="R-MMU-109704">
    <property type="pathway name" value="PI3K Cascade"/>
</dbReference>
<dbReference type="Reactome" id="R-MMU-1257604">
    <property type="pathway name" value="PIP3 activates AKT signaling"/>
</dbReference>
<dbReference type="Reactome" id="R-MMU-190372">
    <property type="pathway name" value="FGFR3c ligand binding and activation"/>
</dbReference>
<dbReference type="Reactome" id="R-MMU-190373">
    <property type="pathway name" value="FGFR1c ligand binding and activation"/>
</dbReference>
<dbReference type="Reactome" id="R-MMU-190375">
    <property type="pathway name" value="FGFR2c ligand binding and activation"/>
</dbReference>
<dbReference type="Reactome" id="R-MMU-5654219">
    <property type="pathway name" value="Phospholipase C-mediated cascade: FGFR1"/>
</dbReference>
<dbReference type="Reactome" id="R-MMU-5654221">
    <property type="pathway name" value="Phospholipase C-mediated cascade, FGFR2"/>
</dbReference>
<dbReference type="Reactome" id="R-MMU-5654227">
    <property type="pathway name" value="Phospholipase C-mediated cascade, FGFR3"/>
</dbReference>
<dbReference type="Reactome" id="R-MMU-5654687">
    <property type="pathway name" value="Downstream signaling of activated FGFR1"/>
</dbReference>
<dbReference type="Reactome" id="R-MMU-5654688">
    <property type="pathway name" value="SHC-mediated cascade:FGFR1"/>
</dbReference>
<dbReference type="Reactome" id="R-MMU-5654689">
    <property type="pathway name" value="PI-3K cascade:FGFR1"/>
</dbReference>
<dbReference type="Reactome" id="R-MMU-5654693">
    <property type="pathway name" value="FRS-mediated FGFR1 signaling"/>
</dbReference>
<dbReference type="Reactome" id="R-MMU-5654695">
    <property type="pathway name" value="PI-3K cascade:FGFR2"/>
</dbReference>
<dbReference type="Reactome" id="R-MMU-5654699">
    <property type="pathway name" value="SHC-mediated cascade:FGFR2"/>
</dbReference>
<dbReference type="Reactome" id="R-MMU-5654700">
    <property type="pathway name" value="FRS-mediated FGFR2 signaling"/>
</dbReference>
<dbReference type="Reactome" id="R-MMU-5654704">
    <property type="pathway name" value="SHC-mediated cascade:FGFR3"/>
</dbReference>
<dbReference type="Reactome" id="R-MMU-5654706">
    <property type="pathway name" value="FRS-mediated FGFR3 signaling"/>
</dbReference>
<dbReference type="Reactome" id="R-MMU-5654710">
    <property type="pathway name" value="PI-3K cascade:FGFR3"/>
</dbReference>
<dbReference type="Reactome" id="R-MMU-5654726">
    <property type="pathway name" value="Negative regulation of FGFR1 signaling"/>
</dbReference>
<dbReference type="Reactome" id="R-MMU-5654727">
    <property type="pathway name" value="Negative regulation of FGFR2 signaling"/>
</dbReference>
<dbReference type="Reactome" id="R-MMU-5654732">
    <property type="pathway name" value="Negative regulation of FGFR3 signaling"/>
</dbReference>
<dbReference type="Reactome" id="R-MMU-5658623">
    <property type="pathway name" value="FGFRL1 modulation of FGFR1 signaling"/>
</dbReference>
<dbReference type="Reactome" id="R-MMU-5673001">
    <property type="pathway name" value="RAF/MAP kinase cascade"/>
</dbReference>
<dbReference type="Reactome" id="R-MMU-6811558">
    <property type="pathway name" value="PI5P, PP2A and IER3 Regulate PI3K/AKT Signaling"/>
</dbReference>
<dbReference type="BioGRID-ORCS" id="14176">
    <property type="hits" value="3 hits in 80 CRISPR screens"/>
</dbReference>
<dbReference type="ChiTaRS" id="Fgf5">
    <property type="organism name" value="mouse"/>
</dbReference>
<dbReference type="PRO" id="PR:P15656"/>
<dbReference type="Proteomes" id="UP000000589">
    <property type="component" value="Chromosome 5"/>
</dbReference>
<dbReference type="RNAct" id="P15656">
    <property type="molecule type" value="protein"/>
</dbReference>
<dbReference type="Bgee" id="ENSMUSG00000029337">
    <property type="expression patterns" value="Expressed in mesenchyme of tongue and 66 other cell types or tissues"/>
</dbReference>
<dbReference type="GO" id="GO:0005576">
    <property type="term" value="C:extracellular region"/>
    <property type="evidence" value="ECO:0007669"/>
    <property type="project" value="UniProtKB-SubCell"/>
</dbReference>
<dbReference type="GO" id="GO:0005104">
    <property type="term" value="F:fibroblast growth factor receptor binding"/>
    <property type="evidence" value="ECO:0000266"/>
    <property type="project" value="MGI"/>
</dbReference>
<dbReference type="GO" id="GO:0008083">
    <property type="term" value="F:growth factor activity"/>
    <property type="evidence" value="ECO:0007669"/>
    <property type="project" value="UniProtKB-KW"/>
</dbReference>
<dbReference type="GO" id="GO:0008543">
    <property type="term" value="P:fibroblast growth factor receptor signaling pathway"/>
    <property type="evidence" value="ECO:0000266"/>
    <property type="project" value="MGI"/>
</dbReference>
<dbReference type="GO" id="GO:0010001">
    <property type="term" value="P:glial cell differentiation"/>
    <property type="evidence" value="ECO:0000315"/>
    <property type="project" value="MGI"/>
</dbReference>
<dbReference type="GO" id="GO:0051781">
    <property type="term" value="P:positive regulation of cell division"/>
    <property type="evidence" value="ECO:0007669"/>
    <property type="project" value="UniProtKB-KW"/>
</dbReference>
<dbReference type="GO" id="GO:0008284">
    <property type="term" value="P:positive regulation of cell population proliferation"/>
    <property type="evidence" value="ECO:0000266"/>
    <property type="project" value="MGI"/>
</dbReference>
<dbReference type="GO" id="GO:0023019">
    <property type="term" value="P:signal transduction involved in regulation of gene expression"/>
    <property type="evidence" value="ECO:0000314"/>
    <property type="project" value="MGI"/>
</dbReference>
<dbReference type="CDD" id="cd23317">
    <property type="entry name" value="beta-trefoil_FGF5"/>
    <property type="match status" value="1"/>
</dbReference>
<dbReference type="FunFam" id="2.80.10.50:FF:000042">
    <property type="entry name" value="Fibroblast growth factor"/>
    <property type="match status" value="1"/>
</dbReference>
<dbReference type="Gene3D" id="2.80.10.50">
    <property type="match status" value="1"/>
</dbReference>
<dbReference type="InterPro" id="IPR002209">
    <property type="entry name" value="Fibroblast_GF_fam"/>
</dbReference>
<dbReference type="InterPro" id="IPR008996">
    <property type="entry name" value="IL1/FGF"/>
</dbReference>
<dbReference type="PANTHER" id="PTHR11486">
    <property type="entry name" value="FIBROBLAST GROWTH FACTOR"/>
    <property type="match status" value="1"/>
</dbReference>
<dbReference type="Pfam" id="PF00167">
    <property type="entry name" value="FGF"/>
    <property type="match status" value="1"/>
</dbReference>
<dbReference type="PRINTS" id="PR00263">
    <property type="entry name" value="HBGFFGF"/>
</dbReference>
<dbReference type="PRINTS" id="PR00262">
    <property type="entry name" value="IL1HBGF"/>
</dbReference>
<dbReference type="SMART" id="SM00442">
    <property type="entry name" value="FGF"/>
    <property type="match status" value="1"/>
</dbReference>
<dbReference type="SUPFAM" id="SSF50353">
    <property type="entry name" value="Cytokine"/>
    <property type="match status" value="1"/>
</dbReference>
<dbReference type="PROSITE" id="PS00247">
    <property type="entry name" value="HBGF_FGF"/>
    <property type="match status" value="1"/>
</dbReference>
<accession>P15656</accession>
<accession>O88825</accession>
<sequence>MSLSLLFLIFCSHLIHSAWAHGEKRLTPEGQPAPPRNPGDSSGSRGRSSATFSSSSASSPVAASPGSQGSGSEHSSFQWSPSGRRTGSLYCRVGIGFHLQIYPDGKVNGSHEASVLSILEIFAVSQGIVGIRGVFSNKFLAMSKKGKLHASAKFTDDCKFRERFQENSYNTYASAIHRTEKTGREWYVALNKRGKAKRGCSPRVKPQHVSTHFLPRFKQSEQPELSFTVTVPEKKKPPVKPKVPLSQPRRSPSPVKYRLKFRFG</sequence>